<organism>
    <name type="scientific">Aneura mirabilis</name>
    <name type="common">Parasitic liverwort</name>
    <name type="synonym">Cryptothallus mirabilis</name>
    <dbReference type="NCBI Taxonomy" id="280810"/>
    <lineage>
        <taxon>Eukaryota</taxon>
        <taxon>Viridiplantae</taxon>
        <taxon>Streptophyta</taxon>
        <taxon>Embryophyta</taxon>
        <taxon>Marchantiophyta</taxon>
        <taxon>Jungermanniopsida</taxon>
        <taxon>Metzgeriidae</taxon>
        <taxon>Metzgeriales</taxon>
        <taxon>Aneuraceae</taxon>
        <taxon>Aneura</taxon>
    </lineage>
</organism>
<gene>
    <name evidence="1" type="primary">cemA</name>
</gene>
<sequence length="448" mass="52258">MKNYQQIQPYHCLKKAYEIGKHIRKIKKNYLSHRTVCFHRKRSWQSIVFYTNTGLNNCIFKIYLSLLGYRISLYFMDLCRFLRFYNPPRRDKKFLHRSRVRGYKNHSIPTDLIDGELIREINRKLTWIEVTLSDLYIWKRYFLFPSSSSDGKKINDHPLLGTKGTESIIIVHESIGLLPRSITRTISRFKAELTNQSKPLILREFGLTRYQALSSLQYIGCLISIPSIISTLFQQYFSEPWIRYWWNNEQSQIFLAPAQEDKTLEEVEGIEELSRLDQIIGNSFLGTQSQGLGDGIHEETIESVRNRNDNGIEIISHSLTDIIYLITLSGLFVAGEERLVISNSWAQELFYGLSDTMKAFFILLSTDSCIGFHSPHGWELATSFFHSGFVRDGRIISCSVSTFPVVLDTVLKYLIFRHLNRISPSIVATYHTMNELDSYRIRNKSWKI</sequence>
<feature type="chain" id="PRO_0000346539" description="Potassium/proton antiporter CemA">
    <location>
        <begin position="1"/>
        <end position="448"/>
    </location>
</feature>
<feature type="transmembrane region" description="Helical" evidence="1">
    <location>
        <begin position="47"/>
        <end position="67"/>
    </location>
</feature>
<feature type="transmembrane region" description="Helical" evidence="1">
    <location>
        <begin position="213"/>
        <end position="233"/>
    </location>
</feature>
<feature type="transmembrane region" description="Helical" evidence="1">
    <location>
        <begin position="314"/>
        <end position="334"/>
    </location>
</feature>
<feature type="transmembrane region" description="Helical" evidence="1">
    <location>
        <begin position="395"/>
        <end position="415"/>
    </location>
</feature>
<proteinExistence type="inferred from homology"/>
<keyword id="KW-0050">Antiport</keyword>
<keyword id="KW-0375">Hydrogen ion transport</keyword>
<keyword id="KW-0406">Ion transport</keyword>
<keyword id="KW-0472">Membrane</keyword>
<keyword id="KW-0934">Plastid</keyword>
<keyword id="KW-0630">Potassium</keyword>
<keyword id="KW-0633">Potassium transport</keyword>
<keyword id="KW-0812">Transmembrane</keyword>
<keyword id="KW-1133">Transmembrane helix</keyword>
<keyword id="KW-0813">Transport</keyword>
<dbReference type="EMBL" id="EU043314">
    <property type="protein sequence ID" value="ABS54489.1"/>
    <property type="molecule type" value="Genomic_DNA"/>
</dbReference>
<dbReference type="RefSeq" id="YP_001687228.1">
    <property type="nucleotide sequence ID" value="NC_010359.1"/>
</dbReference>
<dbReference type="SMR" id="B0YPP2"/>
<dbReference type="GeneID" id="5952220"/>
<dbReference type="GO" id="GO:0042170">
    <property type="term" value="C:plastid membrane"/>
    <property type="evidence" value="ECO:0007669"/>
    <property type="project" value="UniProtKB-SubCell"/>
</dbReference>
<dbReference type="GO" id="GO:0015297">
    <property type="term" value="F:antiporter activity"/>
    <property type="evidence" value="ECO:0007669"/>
    <property type="project" value="UniProtKB-KW"/>
</dbReference>
<dbReference type="GO" id="GO:0006813">
    <property type="term" value="P:potassium ion transport"/>
    <property type="evidence" value="ECO:0007669"/>
    <property type="project" value="UniProtKB-KW"/>
</dbReference>
<dbReference type="GO" id="GO:1902600">
    <property type="term" value="P:proton transmembrane transport"/>
    <property type="evidence" value="ECO:0007669"/>
    <property type="project" value="UniProtKB-KW"/>
</dbReference>
<dbReference type="HAMAP" id="MF_01308">
    <property type="entry name" value="CemA_PxcA"/>
    <property type="match status" value="1"/>
</dbReference>
<dbReference type="InterPro" id="IPR004282">
    <property type="entry name" value="CemA"/>
</dbReference>
<dbReference type="PANTHER" id="PTHR33650:SF2">
    <property type="entry name" value="CHLOROPLAST ENVELOPE MEMBRANE PROTEIN"/>
    <property type="match status" value="1"/>
</dbReference>
<dbReference type="PANTHER" id="PTHR33650">
    <property type="entry name" value="CHLOROPLAST ENVELOPE MEMBRANE PROTEIN-RELATED"/>
    <property type="match status" value="1"/>
</dbReference>
<dbReference type="Pfam" id="PF03040">
    <property type="entry name" value="CemA"/>
    <property type="match status" value="1"/>
</dbReference>
<reference key="1">
    <citation type="journal article" date="2008" name="Mol. Biol. Evol.">
        <title>Functional gene losses occur with minimal size reduction in the plastid genome of the parasitic liverwort Aneura mirabilis.</title>
        <authorList>
            <person name="Wickett N.J."/>
            <person name="Zhang Y."/>
            <person name="Hansen S.K."/>
            <person name="Roper J.M."/>
            <person name="Kuehl J.V."/>
            <person name="Plock S.A."/>
            <person name="Wolf P.G."/>
            <person name="dePamphilis C.W."/>
            <person name="Boore J.L."/>
            <person name="Goffinet B."/>
        </authorList>
    </citation>
    <scope>NUCLEOTIDE SEQUENCE [LARGE SCALE GENOMIC DNA]</scope>
</reference>
<geneLocation type="non-photosynthetic plastid"/>
<comment type="function">
    <text evidence="2">May be involved in proton extrusion.</text>
</comment>
<comment type="catalytic activity">
    <reaction evidence="1">
        <text>K(+)(in) + H(+)(out) = K(+)(out) + H(+)(in)</text>
        <dbReference type="Rhea" id="RHEA:29467"/>
        <dbReference type="ChEBI" id="CHEBI:15378"/>
        <dbReference type="ChEBI" id="CHEBI:29103"/>
    </reaction>
</comment>
<comment type="subcellular location">
    <subcellularLocation>
        <location evidence="2">Plastid membrane</location>
        <topology evidence="1">Multi-pass membrane protein</topology>
    </subcellularLocation>
</comment>
<comment type="similarity">
    <text evidence="1">Belongs to the CemA family.</text>
</comment>
<evidence type="ECO:0000255" key="1">
    <source>
        <dbReference type="HAMAP-Rule" id="MF_01308"/>
    </source>
</evidence>
<evidence type="ECO:0000305" key="2"/>
<accession>B0YPP2</accession>
<name>CEMA_ANEMR</name>
<protein>
    <recommendedName>
        <fullName evidence="1">Potassium/proton antiporter CemA</fullName>
    </recommendedName>
    <alternativeName>
        <fullName evidence="2">Plastid envelope membrane protein A</fullName>
    </alternativeName>
</protein>